<proteinExistence type="inferred from homology"/>
<comment type="function">
    <text evidence="1">Catalyzes the base-exchange of a guanine (G) residue with the queuine precursor 7-aminomethyl-7-deazaguanine (PreQ1) at position 34 (anticodon wobble position) in tRNAs with GU(N) anticodons (tRNA-Asp, -Asn, -His and -Tyr). Catalysis occurs through a double-displacement mechanism. The nucleophile active site attacks the C1' of nucleotide 34 to detach the guanine base from the RNA, forming a covalent enzyme-RNA intermediate. The proton acceptor active site deprotonates the incoming PreQ1, allowing a nucleophilic attack on the C1' of the ribose to form the product. After dissociation, two additional enzymatic reactions on the tRNA convert PreQ1 to queuine (Q), resulting in the hypermodified nucleoside queuosine (7-(((4,5-cis-dihydroxy-2-cyclopenten-1-yl)amino)methyl)-7-deazaguanosine).</text>
</comment>
<comment type="catalytic activity">
    <reaction evidence="1">
        <text>7-aminomethyl-7-carbaguanine + guanosine(34) in tRNA = 7-aminomethyl-7-carbaguanosine(34) in tRNA + guanine</text>
        <dbReference type="Rhea" id="RHEA:24104"/>
        <dbReference type="Rhea" id="RHEA-COMP:10341"/>
        <dbReference type="Rhea" id="RHEA-COMP:10342"/>
        <dbReference type="ChEBI" id="CHEBI:16235"/>
        <dbReference type="ChEBI" id="CHEBI:58703"/>
        <dbReference type="ChEBI" id="CHEBI:74269"/>
        <dbReference type="ChEBI" id="CHEBI:82833"/>
        <dbReference type="EC" id="2.4.2.29"/>
    </reaction>
</comment>
<comment type="cofactor">
    <cofactor evidence="1">
        <name>Zn(2+)</name>
        <dbReference type="ChEBI" id="CHEBI:29105"/>
    </cofactor>
    <text evidence="1">Binds 1 zinc ion per subunit.</text>
</comment>
<comment type="pathway">
    <text evidence="1">tRNA modification; tRNA-queuosine biosynthesis.</text>
</comment>
<comment type="subunit">
    <text evidence="1">Homodimer. Within each dimer, one monomer is responsible for RNA recognition and catalysis, while the other monomer binds to the replacement base PreQ1.</text>
</comment>
<comment type="similarity">
    <text evidence="1">Belongs to the queuine tRNA-ribosyltransferase family.</text>
</comment>
<evidence type="ECO:0000255" key="1">
    <source>
        <dbReference type="HAMAP-Rule" id="MF_00168"/>
    </source>
</evidence>
<protein>
    <recommendedName>
        <fullName evidence="1">Queuine tRNA-ribosyltransferase</fullName>
        <ecNumber evidence="1">2.4.2.29</ecNumber>
    </recommendedName>
    <alternativeName>
        <fullName evidence="1">Guanine insertion enzyme</fullName>
    </alternativeName>
    <alternativeName>
        <fullName evidence="1">tRNA-guanine transglycosylase</fullName>
    </alternativeName>
</protein>
<reference key="1">
    <citation type="submission" date="2007-11" db="EMBL/GenBank/DDBJ databases">
        <title>Complete sequence of Delftia acidovorans DSM 14801 / SPH-1.</title>
        <authorList>
            <person name="Copeland A."/>
            <person name="Lucas S."/>
            <person name="Lapidus A."/>
            <person name="Barry K."/>
            <person name="Glavina del Rio T."/>
            <person name="Dalin E."/>
            <person name="Tice H."/>
            <person name="Pitluck S."/>
            <person name="Lowry S."/>
            <person name="Clum A."/>
            <person name="Schmutz J."/>
            <person name="Larimer F."/>
            <person name="Land M."/>
            <person name="Hauser L."/>
            <person name="Kyrpides N."/>
            <person name="Kim E."/>
            <person name="Schleheck D."/>
            <person name="Richardson P."/>
        </authorList>
    </citation>
    <scope>NUCLEOTIDE SEQUENCE [LARGE SCALE GENOMIC DNA]</scope>
    <source>
        <strain>DSM 14801 / SPH-1</strain>
    </source>
</reference>
<accession>A9BRD7</accession>
<keyword id="KW-0328">Glycosyltransferase</keyword>
<keyword id="KW-0479">Metal-binding</keyword>
<keyword id="KW-0671">Queuosine biosynthesis</keyword>
<keyword id="KW-1185">Reference proteome</keyword>
<keyword id="KW-0808">Transferase</keyword>
<keyword id="KW-0819">tRNA processing</keyword>
<keyword id="KW-0862">Zinc</keyword>
<gene>
    <name evidence="1" type="primary">tgt</name>
    <name type="ordered locus">Daci_0549</name>
</gene>
<dbReference type="EC" id="2.4.2.29" evidence="1"/>
<dbReference type="EMBL" id="CP000884">
    <property type="protein sequence ID" value="ABX33195.1"/>
    <property type="molecule type" value="Genomic_DNA"/>
</dbReference>
<dbReference type="RefSeq" id="WP_012202481.1">
    <property type="nucleotide sequence ID" value="NC_010002.1"/>
</dbReference>
<dbReference type="SMR" id="A9BRD7"/>
<dbReference type="STRING" id="398578.Daci_0549"/>
<dbReference type="GeneID" id="24115539"/>
<dbReference type="KEGG" id="dac:Daci_0549"/>
<dbReference type="eggNOG" id="COG0343">
    <property type="taxonomic scope" value="Bacteria"/>
</dbReference>
<dbReference type="HOGENOM" id="CLU_022060_0_1_4"/>
<dbReference type="UniPathway" id="UPA00392"/>
<dbReference type="Proteomes" id="UP000000784">
    <property type="component" value="Chromosome"/>
</dbReference>
<dbReference type="GO" id="GO:0005829">
    <property type="term" value="C:cytosol"/>
    <property type="evidence" value="ECO:0007669"/>
    <property type="project" value="TreeGrafter"/>
</dbReference>
<dbReference type="GO" id="GO:0046872">
    <property type="term" value="F:metal ion binding"/>
    <property type="evidence" value="ECO:0007669"/>
    <property type="project" value="UniProtKB-KW"/>
</dbReference>
<dbReference type="GO" id="GO:0008479">
    <property type="term" value="F:tRNA-guanosine(34) queuine transglycosylase activity"/>
    <property type="evidence" value="ECO:0007669"/>
    <property type="project" value="UniProtKB-UniRule"/>
</dbReference>
<dbReference type="GO" id="GO:0008616">
    <property type="term" value="P:queuosine biosynthetic process"/>
    <property type="evidence" value="ECO:0007669"/>
    <property type="project" value="UniProtKB-UniRule"/>
</dbReference>
<dbReference type="GO" id="GO:0002099">
    <property type="term" value="P:tRNA wobble guanine modification"/>
    <property type="evidence" value="ECO:0007669"/>
    <property type="project" value="TreeGrafter"/>
</dbReference>
<dbReference type="GO" id="GO:0101030">
    <property type="term" value="P:tRNA-guanine transglycosylation"/>
    <property type="evidence" value="ECO:0007669"/>
    <property type="project" value="InterPro"/>
</dbReference>
<dbReference type="FunFam" id="3.20.20.105:FF:000001">
    <property type="entry name" value="Queuine tRNA-ribosyltransferase"/>
    <property type="match status" value="1"/>
</dbReference>
<dbReference type="Gene3D" id="3.20.20.105">
    <property type="entry name" value="Queuine tRNA-ribosyltransferase-like"/>
    <property type="match status" value="1"/>
</dbReference>
<dbReference type="HAMAP" id="MF_00168">
    <property type="entry name" value="Q_tRNA_Tgt"/>
    <property type="match status" value="1"/>
</dbReference>
<dbReference type="InterPro" id="IPR050076">
    <property type="entry name" value="ArchSynthase1/Queuine_TRR"/>
</dbReference>
<dbReference type="InterPro" id="IPR004803">
    <property type="entry name" value="TGT"/>
</dbReference>
<dbReference type="InterPro" id="IPR036511">
    <property type="entry name" value="TGT-like_sf"/>
</dbReference>
<dbReference type="InterPro" id="IPR002616">
    <property type="entry name" value="tRNA_ribo_trans-like"/>
</dbReference>
<dbReference type="NCBIfam" id="TIGR00430">
    <property type="entry name" value="Q_tRNA_tgt"/>
    <property type="match status" value="1"/>
</dbReference>
<dbReference type="NCBIfam" id="TIGR00449">
    <property type="entry name" value="tgt_general"/>
    <property type="match status" value="1"/>
</dbReference>
<dbReference type="PANTHER" id="PTHR46499">
    <property type="entry name" value="QUEUINE TRNA-RIBOSYLTRANSFERASE"/>
    <property type="match status" value="1"/>
</dbReference>
<dbReference type="PANTHER" id="PTHR46499:SF1">
    <property type="entry name" value="QUEUINE TRNA-RIBOSYLTRANSFERASE"/>
    <property type="match status" value="1"/>
</dbReference>
<dbReference type="Pfam" id="PF01702">
    <property type="entry name" value="TGT"/>
    <property type="match status" value="1"/>
</dbReference>
<dbReference type="SUPFAM" id="SSF51713">
    <property type="entry name" value="tRNA-guanine transglycosylase"/>
    <property type="match status" value="1"/>
</dbReference>
<feature type="chain" id="PRO_1000097539" description="Queuine tRNA-ribosyltransferase">
    <location>
        <begin position="1"/>
        <end position="390"/>
    </location>
</feature>
<feature type="region of interest" description="RNA binding" evidence="1">
    <location>
        <begin position="253"/>
        <end position="259"/>
    </location>
</feature>
<feature type="region of interest" description="RNA binding; important for wobble base 34 recognition" evidence="1">
    <location>
        <begin position="277"/>
        <end position="281"/>
    </location>
</feature>
<feature type="active site" description="Proton acceptor" evidence="1">
    <location>
        <position position="92"/>
    </location>
</feature>
<feature type="active site" description="Nucleophile" evidence="1">
    <location>
        <position position="272"/>
    </location>
</feature>
<feature type="binding site" evidence="1">
    <location>
        <begin position="92"/>
        <end position="96"/>
    </location>
    <ligand>
        <name>substrate</name>
    </ligand>
</feature>
<feature type="binding site" evidence="1">
    <location>
        <position position="146"/>
    </location>
    <ligand>
        <name>substrate</name>
    </ligand>
</feature>
<feature type="binding site" evidence="1">
    <location>
        <position position="195"/>
    </location>
    <ligand>
        <name>substrate</name>
    </ligand>
</feature>
<feature type="binding site" evidence="1">
    <location>
        <position position="222"/>
    </location>
    <ligand>
        <name>substrate</name>
    </ligand>
</feature>
<feature type="binding site" evidence="1">
    <location>
        <position position="310"/>
    </location>
    <ligand>
        <name>Zn(2+)</name>
        <dbReference type="ChEBI" id="CHEBI:29105"/>
    </ligand>
</feature>
<feature type="binding site" evidence="1">
    <location>
        <position position="312"/>
    </location>
    <ligand>
        <name>Zn(2+)</name>
        <dbReference type="ChEBI" id="CHEBI:29105"/>
    </ligand>
</feature>
<feature type="binding site" evidence="1">
    <location>
        <position position="315"/>
    </location>
    <ligand>
        <name>Zn(2+)</name>
        <dbReference type="ChEBI" id="CHEBI:29105"/>
    </ligand>
</feature>
<feature type="binding site" evidence="1">
    <location>
        <position position="354"/>
    </location>
    <ligand>
        <name>Zn(2+)</name>
        <dbReference type="ChEBI" id="CHEBI:29105"/>
    </ligand>
</feature>
<organism>
    <name type="scientific">Delftia acidovorans (strain DSM 14801 / SPH-1)</name>
    <dbReference type="NCBI Taxonomy" id="398578"/>
    <lineage>
        <taxon>Bacteria</taxon>
        <taxon>Pseudomonadati</taxon>
        <taxon>Pseudomonadota</taxon>
        <taxon>Betaproteobacteria</taxon>
        <taxon>Burkholderiales</taxon>
        <taxon>Comamonadaceae</taxon>
        <taxon>Delftia</taxon>
    </lineage>
</organism>
<name>TGT_DELAS</name>
<sequence length="390" mass="43545">MLQFDLLKTDPSSHARRGQLTLNHGVVQTPIFMPVGTYGTVKGVMPRSLQEMGAQIILGNTFHLWMRPGLDIMQSFGGLHGFEKWDKPILTDSGGFQVWSLGAMRKITEEGVHFASPVNGDKLFMSPEVSMQIQTVLNSDIVMQLDECTPYETNGHKTTEAEARKSMEMSRRWAKRSSDEFQRLGNPNALFGIVQGGMYENLREESLQALVEMDFPGYAVGGVSVGEPKDEMLAIMAHTPHRLPAHKPRYLMGVGTPEDLVQGVADGVDMFDCVMPTRNARNGTIFTRYGDLKIRNARHKTDHQPLDPSCTCHACAGTSGVSWEQGGRDGFSRAYLHHLDRCGEMLGPMLTTIHNLHYYLNLMQEVRNALEAGNFTEMRARFKAERARGV</sequence>